<keyword id="KW-0150">Chloroplast</keyword>
<keyword id="KW-0472">Membrane</keyword>
<keyword id="KW-0520">NAD</keyword>
<keyword id="KW-0521">NADP</keyword>
<keyword id="KW-0934">Plastid</keyword>
<keyword id="KW-0618">Plastoquinone</keyword>
<keyword id="KW-0874">Quinone</keyword>
<keyword id="KW-0793">Thylakoid</keyword>
<keyword id="KW-1278">Translocase</keyword>
<keyword id="KW-0812">Transmembrane</keyword>
<keyword id="KW-1133">Transmembrane helix</keyword>
<keyword id="KW-0813">Transport</keyword>
<organism>
    <name type="scientific">Pachira aquatica</name>
    <name type="common">Guiana chestnut</name>
    <dbReference type="NCBI Taxonomy" id="69118"/>
    <lineage>
        <taxon>Eukaryota</taxon>
        <taxon>Viridiplantae</taxon>
        <taxon>Streptophyta</taxon>
        <taxon>Embryophyta</taxon>
        <taxon>Tracheophyta</taxon>
        <taxon>Spermatophyta</taxon>
        <taxon>Magnoliopsida</taxon>
        <taxon>eudicotyledons</taxon>
        <taxon>Gunneridae</taxon>
        <taxon>Pentapetalae</taxon>
        <taxon>rosids</taxon>
        <taxon>malvids</taxon>
        <taxon>Malvales</taxon>
        <taxon>Malvaceae</taxon>
        <taxon>Bombacoideae</taxon>
        <taxon>Pachira</taxon>
    </lineage>
</organism>
<dbReference type="EC" id="7.1.1.-"/>
<dbReference type="EMBL" id="AF111732">
    <property type="protein sequence ID" value="AAF27212.1"/>
    <property type="molecule type" value="Genomic_DNA"/>
</dbReference>
<dbReference type="GO" id="GO:0009535">
    <property type="term" value="C:chloroplast thylakoid membrane"/>
    <property type="evidence" value="ECO:0007669"/>
    <property type="project" value="UniProtKB-SubCell"/>
</dbReference>
<dbReference type="GO" id="GO:0008137">
    <property type="term" value="F:NADH dehydrogenase (ubiquinone) activity"/>
    <property type="evidence" value="ECO:0007669"/>
    <property type="project" value="InterPro"/>
</dbReference>
<dbReference type="GO" id="GO:0048038">
    <property type="term" value="F:quinone binding"/>
    <property type="evidence" value="ECO:0007669"/>
    <property type="project" value="UniProtKB-KW"/>
</dbReference>
<dbReference type="GO" id="GO:0042773">
    <property type="term" value="P:ATP synthesis coupled electron transport"/>
    <property type="evidence" value="ECO:0007669"/>
    <property type="project" value="InterPro"/>
</dbReference>
<dbReference type="GO" id="GO:0015990">
    <property type="term" value="P:electron transport coupled proton transport"/>
    <property type="evidence" value="ECO:0007669"/>
    <property type="project" value="TreeGrafter"/>
</dbReference>
<dbReference type="Gene3D" id="1.20.5.2700">
    <property type="match status" value="1"/>
</dbReference>
<dbReference type="InterPro" id="IPR002128">
    <property type="entry name" value="NADH_UbQ_OxRdtase_chlpt_su5_C"/>
</dbReference>
<dbReference type="InterPro" id="IPR018393">
    <property type="entry name" value="NADHpl_OxRdtase_5_subgr"/>
</dbReference>
<dbReference type="InterPro" id="IPR001750">
    <property type="entry name" value="ND/Mrp_TM"/>
</dbReference>
<dbReference type="InterPro" id="IPR003945">
    <property type="entry name" value="NU5C-like"/>
</dbReference>
<dbReference type="InterPro" id="IPR001516">
    <property type="entry name" value="Proton_antipo_N"/>
</dbReference>
<dbReference type="NCBIfam" id="TIGR01974">
    <property type="entry name" value="NDH_I_L"/>
    <property type="match status" value="1"/>
</dbReference>
<dbReference type="PANTHER" id="PTHR42829">
    <property type="entry name" value="NADH-UBIQUINONE OXIDOREDUCTASE CHAIN 5"/>
    <property type="match status" value="1"/>
</dbReference>
<dbReference type="PANTHER" id="PTHR42829:SF2">
    <property type="entry name" value="NADH-UBIQUINONE OXIDOREDUCTASE CHAIN 5"/>
    <property type="match status" value="1"/>
</dbReference>
<dbReference type="Pfam" id="PF01010">
    <property type="entry name" value="Proton_antipo_C"/>
    <property type="match status" value="1"/>
</dbReference>
<dbReference type="Pfam" id="PF00361">
    <property type="entry name" value="Proton_antipo_M"/>
    <property type="match status" value="1"/>
</dbReference>
<dbReference type="Pfam" id="PF00662">
    <property type="entry name" value="Proton_antipo_N"/>
    <property type="match status" value="1"/>
</dbReference>
<dbReference type="PRINTS" id="PR01434">
    <property type="entry name" value="NADHDHGNASE5"/>
</dbReference>
<dbReference type="PRINTS" id="PR01435">
    <property type="entry name" value="NPOXDRDTASE5"/>
</dbReference>
<feature type="chain" id="PRO_0000118199" description="NAD(P)H-quinone oxidoreductase subunit 5, chloroplastic">
    <location>
        <begin position="1"/>
        <end position="709" status="greater than"/>
    </location>
</feature>
<feature type="transmembrane region" description="Helical" evidence="2">
    <location>
        <begin position="9"/>
        <end position="29"/>
    </location>
</feature>
<feature type="transmembrane region" description="Helical" evidence="2">
    <location>
        <begin position="40"/>
        <end position="60"/>
    </location>
</feature>
<feature type="transmembrane region" description="Helical" evidence="2">
    <location>
        <begin position="89"/>
        <end position="109"/>
    </location>
</feature>
<feature type="transmembrane region" description="Helical" evidence="2">
    <location>
        <begin position="125"/>
        <end position="145"/>
    </location>
</feature>
<feature type="transmembrane region" description="Helical" evidence="2">
    <location>
        <begin position="147"/>
        <end position="167"/>
    </location>
</feature>
<feature type="transmembrane region" description="Helical" evidence="2">
    <location>
        <begin position="219"/>
        <end position="239"/>
    </location>
</feature>
<feature type="transmembrane region" description="Helical" evidence="2">
    <location>
        <begin position="257"/>
        <end position="277"/>
    </location>
</feature>
<feature type="transmembrane region" description="Helical" evidence="2">
    <location>
        <begin position="280"/>
        <end position="300"/>
    </location>
</feature>
<feature type="transmembrane region" description="Helical" evidence="2">
    <location>
        <begin position="327"/>
        <end position="347"/>
    </location>
</feature>
<feature type="transmembrane region" description="Helical" evidence="2">
    <location>
        <begin position="354"/>
        <end position="374"/>
    </location>
</feature>
<feature type="transmembrane region" description="Helical" evidence="2">
    <location>
        <begin position="396"/>
        <end position="416"/>
    </location>
</feature>
<feature type="transmembrane region" description="Helical" evidence="2">
    <location>
        <begin position="425"/>
        <end position="445"/>
    </location>
</feature>
<feature type="transmembrane region" description="Helical" evidence="2">
    <location>
        <begin position="540"/>
        <end position="560"/>
    </location>
</feature>
<feature type="transmembrane region" description="Helical" evidence="2">
    <location>
        <begin position="594"/>
        <end position="614"/>
    </location>
</feature>
<feature type="non-terminal residue">
    <location>
        <position position="709"/>
    </location>
</feature>
<reference key="1">
    <citation type="journal article" date="1999" name="Am. J. Bot.">
        <title>Phylogeny of the core Malvales: evidence from ndhF sequence data.</title>
        <authorList>
            <person name="Alverson W.S."/>
            <person name="Whitlock B.A."/>
            <person name="Nyffeler R."/>
            <person name="Bayer C."/>
            <person name="Baum D.A."/>
        </authorList>
    </citation>
    <scope>NUCLEOTIDE SEQUENCE [GENOMIC DNA]</scope>
</reference>
<sequence>MEHTYQYSWIIPFVPLPIPIKIGMGLLLFPMATKNLRRMWAFPNILLLSIVMIFSVDLSIQQINRSSIYQYVWSWTINNDFSFEFGYFIDSLTSIMSILITTVGIFVLIYXDNYMSHDQGYLRFFAYMSLFNTSMLGLLTXSNLIQIYXFWELVGMCSYLLIGFWFTXPAAANACQKAFVTNRICDFGLSLXILRXYWITGXFEFQDLFEIFNNLIYNNEVHFLFVTLCASLLFAGAVAKSAQFPLHVWLPDAMEGPTPISALIHAATMVAAGIFLVPRLLPLFIVIPYIMNLISLIGIITVLLGATLALAQKDIKRGLAYSTMSQLGYMMLALGMGSYRAALFHLITHAYSKALLFLGSGSIIHSMEAIVGYSPDKSQNMVFMGGLRKHVPITQIAFLVGTLSLCGIPPLACFWSKDEILSDSWLYSPIFAIIAWSTAGLTASYXFRIYLLTFEGHXNIHFQNYSXKKXSSXYSIKLWGKEEQKMINRNFRLFPLLTMNNNEKPYRIGGNVKKVALITITNFGYKKAFSYPHESDNTMLFPMLILVLFTLFVGAIAIPFNQEGIHFDILSKLLTPSINLLHQNSNDFEDWYQFLTNATFSVSIASFGIFTAFLLYKPFYSSLQNLNLLNSFAKRGPKRIFLDKIIYLIYDWSYNRGYIDTFYSISLTKGIRGLAELTHFFDRRVIDGITNGVXITSFFVGEGIKYVGG</sequence>
<name>NU5C_PACAQ</name>
<evidence type="ECO:0000250" key="1"/>
<evidence type="ECO:0000255" key="2"/>
<evidence type="ECO:0000305" key="3"/>
<proteinExistence type="inferred from homology"/>
<accession>Q9MVK2</accession>
<gene>
    <name type="primary">ndhF</name>
</gene>
<geneLocation type="chloroplast"/>
<comment type="function">
    <text evidence="1">NDH shuttles electrons from NAD(P)H:plastoquinone, via FMN and iron-sulfur (Fe-S) centers, to quinones in the photosynthetic chain and possibly in a chloroplast respiratory chain. The immediate electron acceptor for the enzyme in this species is believed to be plastoquinone. Couples the redox reaction to proton translocation, and thus conserves the redox energy in a proton gradient (By similarity).</text>
</comment>
<comment type="catalytic activity">
    <reaction>
        <text>a plastoquinone + NADH + (n+1) H(+)(in) = a plastoquinol + NAD(+) + n H(+)(out)</text>
        <dbReference type="Rhea" id="RHEA:42608"/>
        <dbReference type="Rhea" id="RHEA-COMP:9561"/>
        <dbReference type="Rhea" id="RHEA-COMP:9562"/>
        <dbReference type="ChEBI" id="CHEBI:15378"/>
        <dbReference type="ChEBI" id="CHEBI:17757"/>
        <dbReference type="ChEBI" id="CHEBI:57540"/>
        <dbReference type="ChEBI" id="CHEBI:57945"/>
        <dbReference type="ChEBI" id="CHEBI:62192"/>
    </reaction>
</comment>
<comment type="catalytic activity">
    <reaction>
        <text>a plastoquinone + NADPH + (n+1) H(+)(in) = a plastoquinol + NADP(+) + n H(+)(out)</text>
        <dbReference type="Rhea" id="RHEA:42612"/>
        <dbReference type="Rhea" id="RHEA-COMP:9561"/>
        <dbReference type="Rhea" id="RHEA-COMP:9562"/>
        <dbReference type="ChEBI" id="CHEBI:15378"/>
        <dbReference type="ChEBI" id="CHEBI:17757"/>
        <dbReference type="ChEBI" id="CHEBI:57783"/>
        <dbReference type="ChEBI" id="CHEBI:58349"/>
        <dbReference type="ChEBI" id="CHEBI:62192"/>
    </reaction>
</comment>
<comment type="subunit">
    <text evidence="1">NDH is composed of at least 16 different subunits, 5 of which are encoded in the nucleus.</text>
</comment>
<comment type="subcellular location">
    <subcellularLocation>
        <location evidence="1">Plastid</location>
        <location evidence="1">Chloroplast thylakoid membrane</location>
        <topology evidence="1">Multi-pass membrane protein</topology>
    </subcellularLocation>
</comment>
<comment type="similarity">
    <text evidence="3">Belongs to the complex I subunit 5 family.</text>
</comment>
<protein>
    <recommendedName>
        <fullName>NAD(P)H-quinone oxidoreductase subunit 5, chloroplastic</fullName>
        <ecNumber>7.1.1.-</ecNumber>
    </recommendedName>
    <alternativeName>
        <fullName>NAD(P)H dehydrogenase subunit 5</fullName>
    </alternativeName>
    <alternativeName>
        <fullName>NADH-plastoquinone oxidoreductase subunit 5</fullName>
    </alternativeName>
</protein>